<accession>A6Q6I2</accession>
<sequence>MLNSLHSGNRLRVDFSKTPREIEIPNLLQLQQKSYENFLMLGERDRKHSTLERVFRSAFPIHDQQNRLTLTYKNSEIIKPKYTVRECMERGLTYSVSLKMNIALTIWNRDEKTGEKLDPKEIKEQAVFVRDIPLMTERTSFVVNGVERVIVNQLHRSPGVIFKEEESTTAGHKLLYSAQIIPDRGSWLYFEYDAKDILYARINKRRKIPVTILFRALDYTKEDIVKLFYPTKEISIKDNRFLVKFDPSDFSGRAEYDVKDMDGNVIVNAGKRLTKKKAQQLIENGLEWIEYPLEMLMERHLATAVIDQESGEVLYDVVAPLDETKLKKMIEQGIESIEIINDLAEGTDKSIINAFIADNESLRLLKQTEEIDDENVLSAIRIYKVMRPGEPVTPEAAKSFLRQLFFDPERYDLTEVGRMKMNHKLGLDIPQYATVLTAEDLINTVKYLIKVKNGHGHIDDRDHLGNRRIRAIGELLGNELHNGLVKMQKAIKDKMTTISGTLDELMPHDLVNSKMITNTILEFFSSGQLSQFMDQTNPLSEVTHKRRLSALGEGGLVKERAGFEVRDVHPTHYGRICPIETPEGQNIGLINTLATYSKVNEHGFIEAPYKVVKDAQVTDEIVYITATQEEDKCIAPASTKVDENGKIVEDLIETRLNGNIELNEAKRVDLIDISPLMISGSAAALIPFLEHDDANRALMGSNMQRQAVPLLKTDAPVVGTGMEAIVSRDAWEAVKAKRAGKVEKVDAKNIYIMGEDETGVFIDHYPLEKNMRTNQNTTFTQTPIVKLGDVIEVGQVIADGANMDQGELAIGKNIMVAFMPWYGYNYEDAIIVSEKIIREDTFTSVHTYEKEVEARELKHGTEEITRDIPNIREDELLHLDESGIVQLGTYVKPGMILVGKVSPKGEIKPTPEERLLRAIFGEKAGHVVNKSLYCPASMEGVVVDIKVFTKKGYEKDARAIQAYEEEKAILDSDHHDQLLMIDREEILRIAHYLSGQELAKDVTIGDKEYKAGSKIDEETIKGVNRFALRGVVQSYSDDVQNEYEALKNYFLKQKKRLKNEHEEKLSILEKDDILPSGVTKLVKIYIATKRKLKVGDKMAGRHGNKGIVSNIVPEIDMPYMEDGRPVEIILNPLGVPSRMNIGQILEVHLGLVGMRLGEQIQEMFDNKTADFIKELRAKMIEIADVAKLMNAKEVLSQMSDEELLAYGRDWSRGVKFAAPVFEGTNQTEFDKLFELAKIESDGKMTLYDGKTGEKMIERVNVGYMYMLKLHHLVDEKVHARSTGPYSLVTQQPVGGKALFGGQRFGEMEVWALEAYGASHILKEMLTIKSDDVEGRARAYRALTKGESVPASGVPETMFVLTKELQALGLDAELYESKKEVESEDE</sequence>
<protein>
    <recommendedName>
        <fullName evidence="1">DNA-directed RNA polymerase subunit beta</fullName>
        <shortName evidence="1">RNAP subunit beta</shortName>
        <ecNumber evidence="1">2.7.7.6</ecNumber>
    </recommendedName>
    <alternativeName>
        <fullName evidence="1">RNA polymerase subunit beta</fullName>
    </alternativeName>
    <alternativeName>
        <fullName evidence="1">Transcriptase subunit beta</fullName>
    </alternativeName>
</protein>
<comment type="function">
    <text evidence="1">DNA-dependent RNA polymerase catalyzes the transcription of DNA into RNA using the four ribonucleoside triphosphates as substrates.</text>
</comment>
<comment type="catalytic activity">
    <reaction evidence="1">
        <text>RNA(n) + a ribonucleoside 5'-triphosphate = RNA(n+1) + diphosphate</text>
        <dbReference type="Rhea" id="RHEA:21248"/>
        <dbReference type="Rhea" id="RHEA-COMP:14527"/>
        <dbReference type="Rhea" id="RHEA-COMP:17342"/>
        <dbReference type="ChEBI" id="CHEBI:33019"/>
        <dbReference type="ChEBI" id="CHEBI:61557"/>
        <dbReference type="ChEBI" id="CHEBI:140395"/>
        <dbReference type="EC" id="2.7.7.6"/>
    </reaction>
</comment>
<comment type="subunit">
    <text evidence="1">The RNAP catalytic core consists of 2 alpha, 1 beta, 1 beta' and 1 omega subunit. When a sigma factor is associated with the core the holoenzyme is formed, which can initiate transcription.</text>
</comment>
<comment type="similarity">
    <text evidence="1">Belongs to the RNA polymerase beta chain family.</text>
</comment>
<organism>
    <name type="scientific">Sulfurovum sp. (strain NBC37-1)</name>
    <dbReference type="NCBI Taxonomy" id="387093"/>
    <lineage>
        <taxon>Bacteria</taxon>
        <taxon>Pseudomonadati</taxon>
        <taxon>Campylobacterota</taxon>
        <taxon>Epsilonproteobacteria</taxon>
        <taxon>Campylobacterales</taxon>
        <taxon>Sulfurovaceae</taxon>
        <taxon>Sulfurovum</taxon>
    </lineage>
</organism>
<reference key="1">
    <citation type="journal article" date="2007" name="Proc. Natl. Acad. Sci. U.S.A.">
        <title>Deep-sea vent epsilon-proteobacterial genomes provide insights into emergence of pathogens.</title>
        <authorList>
            <person name="Nakagawa S."/>
            <person name="Takaki Y."/>
            <person name="Shimamura S."/>
            <person name="Reysenbach A.-L."/>
            <person name="Takai K."/>
            <person name="Horikoshi K."/>
        </authorList>
    </citation>
    <scope>NUCLEOTIDE SEQUENCE [LARGE SCALE GENOMIC DNA]</scope>
    <source>
        <strain>NBC37-1</strain>
    </source>
</reference>
<keyword id="KW-0240">DNA-directed RNA polymerase</keyword>
<keyword id="KW-0548">Nucleotidyltransferase</keyword>
<keyword id="KW-0804">Transcription</keyword>
<keyword id="KW-0808">Transferase</keyword>
<proteinExistence type="inferred from homology"/>
<evidence type="ECO:0000255" key="1">
    <source>
        <dbReference type="HAMAP-Rule" id="MF_01321"/>
    </source>
</evidence>
<feature type="chain" id="PRO_0000329191" description="DNA-directed RNA polymerase subunit beta">
    <location>
        <begin position="1"/>
        <end position="1385"/>
    </location>
</feature>
<name>RPOB_SULNB</name>
<gene>
    <name evidence="1" type="primary">rpoB</name>
    <name type="ordered locus">SUN_0131</name>
</gene>
<dbReference type="EC" id="2.7.7.6" evidence="1"/>
<dbReference type="EMBL" id="AP009179">
    <property type="protein sequence ID" value="BAF71091.1"/>
    <property type="molecule type" value="Genomic_DNA"/>
</dbReference>
<dbReference type="RefSeq" id="WP_011979824.1">
    <property type="nucleotide sequence ID" value="NC_009663.1"/>
</dbReference>
<dbReference type="SMR" id="A6Q6I2"/>
<dbReference type="STRING" id="387093.SUN_0131"/>
<dbReference type="KEGG" id="sun:SUN_0131"/>
<dbReference type="eggNOG" id="COG0085">
    <property type="taxonomic scope" value="Bacteria"/>
</dbReference>
<dbReference type="HOGENOM" id="CLU_000524_4_3_7"/>
<dbReference type="OrthoDB" id="9803954at2"/>
<dbReference type="Proteomes" id="UP000006378">
    <property type="component" value="Chromosome"/>
</dbReference>
<dbReference type="GO" id="GO:0000428">
    <property type="term" value="C:DNA-directed RNA polymerase complex"/>
    <property type="evidence" value="ECO:0007669"/>
    <property type="project" value="UniProtKB-KW"/>
</dbReference>
<dbReference type="GO" id="GO:0003677">
    <property type="term" value="F:DNA binding"/>
    <property type="evidence" value="ECO:0007669"/>
    <property type="project" value="UniProtKB-UniRule"/>
</dbReference>
<dbReference type="GO" id="GO:0003899">
    <property type="term" value="F:DNA-directed RNA polymerase activity"/>
    <property type="evidence" value="ECO:0007669"/>
    <property type="project" value="UniProtKB-UniRule"/>
</dbReference>
<dbReference type="GO" id="GO:0032549">
    <property type="term" value="F:ribonucleoside binding"/>
    <property type="evidence" value="ECO:0007669"/>
    <property type="project" value="InterPro"/>
</dbReference>
<dbReference type="GO" id="GO:0006351">
    <property type="term" value="P:DNA-templated transcription"/>
    <property type="evidence" value="ECO:0007669"/>
    <property type="project" value="UniProtKB-UniRule"/>
</dbReference>
<dbReference type="CDD" id="cd00653">
    <property type="entry name" value="RNA_pol_B_RPB2"/>
    <property type="match status" value="1"/>
</dbReference>
<dbReference type="Gene3D" id="2.40.50.100">
    <property type="match status" value="1"/>
</dbReference>
<dbReference type="Gene3D" id="2.40.50.150">
    <property type="match status" value="1"/>
</dbReference>
<dbReference type="Gene3D" id="3.90.1100.10">
    <property type="match status" value="2"/>
</dbReference>
<dbReference type="Gene3D" id="6.10.140.1670">
    <property type="match status" value="1"/>
</dbReference>
<dbReference type="Gene3D" id="2.30.150.10">
    <property type="entry name" value="DNA-directed RNA polymerase, beta subunit, external 1 domain"/>
    <property type="match status" value="1"/>
</dbReference>
<dbReference type="Gene3D" id="2.40.270.10">
    <property type="entry name" value="DNA-directed RNA polymerase, subunit 2, domain 6"/>
    <property type="match status" value="2"/>
</dbReference>
<dbReference type="Gene3D" id="3.90.1800.10">
    <property type="entry name" value="RNA polymerase alpha subunit dimerisation domain"/>
    <property type="match status" value="1"/>
</dbReference>
<dbReference type="Gene3D" id="3.90.1110.10">
    <property type="entry name" value="RNA polymerase Rpb2, domain 2"/>
    <property type="match status" value="2"/>
</dbReference>
<dbReference type="HAMAP" id="MF_01321">
    <property type="entry name" value="RNApol_bact_RpoB"/>
    <property type="match status" value="1"/>
</dbReference>
<dbReference type="InterPro" id="IPR042107">
    <property type="entry name" value="DNA-dir_RNA_pol_bsu_ext_1_sf"/>
</dbReference>
<dbReference type="InterPro" id="IPR019462">
    <property type="entry name" value="DNA-dir_RNA_pol_bsu_external_1"/>
</dbReference>
<dbReference type="InterPro" id="IPR015712">
    <property type="entry name" value="DNA-dir_RNA_pol_su2"/>
</dbReference>
<dbReference type="InterPro" id="IPR007120">
    <property type="entry name" value="DNA-dir_RNAP_su2_dom"/>
</dbReference>
<dbReference type="InterPro" id="IPR037033">
    <property type="entry name" value="DNA-dir_RNAP_su2_hyb_sf"/>
</dbReference>
<dbReference type="InterPro" id="IPR010243">
    <property type="entry name" value="RNA_pol_bsu_bac"/>
</dbReference>
<dbReference type="InterPro" id="IPR007121">
    <property type="entry name" value="RNA_pol_bsu_CS"/>
</dbReference>
<dbReference type="InterPro" id="IPR007644">
    <property type="entry name" value="RNA_pol_bsu_protrusion"/>
</dbReference>
<dbReference type="InterPro" id="IPR007642">
    <property type="entry name" value="RNA_pol_Rpb2_2"/>
</dbReference>
<dbReference type="InterPro" id="IPR037034">
    <property type="entry name" value="RNA_pol_Rpb2_2_sf"/>
</dbReference>
<dbReference type="InterPro" id="IPR007645">
    <property type="entry name" value="RNA_pol_Rpb2_3"/>
</dbReference>
<dbReference type="InterPro" id="IPR007641">
    <property type="entry name" value="RNA_pol_Rpb2_7"/>
</dbReference>
<dbReference type="InterPro" id="IPR014724">
    <property type="entry name" value="RNA_pol_RPB2_OB-fold"/>
</dbReference>
<dbReference type="NCBIfam" id="NF001616">
    <property type="entry name" value="PRK00405.1"/>
    <property type="match status" value="1"/>
</dbReference>
<dbReference type="NCBIfam" id="TIGR02013">
    <property type="entry name" value="rpoB"/>
    <property type="match status" value="1"/>
</dbReference>
<dbReference type="PANTHER" id="PTHR20856">
    <property type="entry name" value="DNA-DIRECTED RNA POLYMERASE I SUBUNIT 2"/>
    <property type="match status" value="1"/>
</dbReference>
<dbReference type="Pfam" id="PF04563">
    <property type="entry name" value="RNA_pol_Rpb2_1"/>
    <property type="match status" value="1"/>
</dbReference>
<dbReference type="Pfam" id="PF04561">
    <property type="entry name" value="RNA_pol_Rpb2_2"/>
    <property type="match status" value="2"/>
</dbReference>
<dbReference type="Pfam" id="PF04565">
    <property type="entry name" value="RNA_pol_Rpb2_3"/>
    <property type="match status" value="1"/>
</dbReference>
<dbReference type="Pfam" id="PF10385">
    <property type="entry name" value="RNA_pol_Rpb2_45"/>
    <property type="match status" value="1"/>
</dbReference>
<dbReference type="Pfam" id="PF00562">
    <property type="entry name" value="RNA_pol_Rpb2_6"/>
    <property type="match status" value="1"/>
</dbReference>
<dbReference type="Pfam" id="PF04560">
    <property type="entry name" value="RNA_pol_Rpb2_7"/>
    <property type="match status" value="1"/>
</dbReference>
<dbReference type="SUPFAM" id="SSF64484">
    <property type="entry name" value="beta and beta-prime subunits of DNA dependent RNA-polymerase"/>
    <property type="match status" value="1"/>
</dbReference>
<dbReference type="PROSITE" id="PS01166">
    <property type="entry name" value="RNA_POL_BETA"/>
    <property type="match status" value="1"/>
</dbReference>